<proteinExistence type="evidence at transcript level"/>
<sequence>MKQESAAQSTPPPSLSPAPSAQPSWEDGDPQALWIFGYGSLVWKPDFAYSDSRVGFVRGYSRRFWQGDTFHRGSDKMPGRVVTLLEDHEGCTWGVAYQVRGEQVSEALKYLNVREAVLGGYDTKEVTFYPQDTPDQPLTALAYVATPQNPGYLGPAPEEVIATQILACRGFSGHNLEYLLRLADFMQLCGPQAQDEHLEAIVDAVGSLLPCSYLSEQPLALI</sequence>
<comment type="function">
    <text evidence="3">Catalyzes the cleavage of glutathione into 5-oxo-L-proline and a Cys-Gly dipeptide. Acts specifically on glutathione, but not on other gamma-glutamyl peptides. Glutathione depletion is an important factor for apoptosis initiation and execution. Acts as a pro-apoptotic component of the unfolded protein response pathway by mediating the pro-apoptotic effects of the ATF4-ATF3-DDIT3/CHOP cascade. Negative regulator of Notch signaling pathway involved in embryonic neurogenesis: acts by inhibiting Notch cleavage by furin, maintaining Notch in an immature inactive form, thereby promoting neurogenesis in embryos.</text>
</comment>
<comment type="catalytic activity">
    <reaction evidence="3">
        <text>glutathione = L-cysteinylglycine + 5-oxo-L-proline</text>
        <dbReference type="Rhea" id="RHEA:47724"/>
        <dbReference type="ChEBI" id="CHEBI:57925"/>
        <dbReference type="ChEBI" id="CHEBI:58402"/>
        <dbReference type="ChEBI" id="CHEBI:61694"/>
        <dbReference type="EC" id="4.3.2.7"/>
    </reaction>
</comment>
<comment type="subunit">
    <text evidence="3">Interacts with NOTCH1 (via extracellular region).</text>
</comment>
<comment type="subcellular location">
    <subcellularLocation>
        <location evidence="3">Cytoplasm</location>
        <location evidence="3">Cytosol</location>
    </subcellularLocation>
    <subcellularLocation>
        <location evidence="2">Golgi apparatus</location>
        <location evidence="2">trans-Golgi network</location>
    </subcellularLocation>
</comment>
<comment type="similarity">
    <text evidence="6">Belongs to the gamma-glutamylcyclotransferase family. ChaC subfamily.</text>
</comment>
<protein>
    <recommendedName>
        <fullName evidence="3">Glutathione-specific gamma-glutamylcyclotransferase 1</fullName>
        <shortName evidence="3">Gamma-GCG 1</shortName>
        <ecNumber evidence="3">4.3.2.7</ecNumber>
    </recommendedName>
    <alternativeName>
        <fullName evidence="3">Blocks Notch protein</fullName>
        <shortName evidence="3">Botch</shortName>
    </alternativeName>
    <alternativeName>
        <fullName evidence="3">Cation transport regulator-like protein 1</fullName>
    </alternativeName>
    <alternativeName>
        <fullName evidence="5">Neuroprotective protein 7</fullName>
    </alternativeName>
</protein>
<name>CHAC1_RAT</name>
<feature type="chain" id="PRO_0000417990" description="Glutathione-specific gamma-glutamylcyclotransferase 1">
    <location>
        <begin position="1"/>
        <end position="222"/>
    </location>
</feature>
<feature type="region of interest" description="Disordered" evidence="4">
    <location>
        <begin position="1"/>
        <end position="25"/>
    </location>
</feature>
<feature type="active site" description="Proton acceptor" evidence="1">
    <location>
        <position position="115"/>
    </location>
</feature>
<feature type="binding site" evidence="1">
    <location>
        <begin position="35"/>
        <end position="40"/>
    </location>
    <ligand>
        <name>substrate</name>
    </ligand>
</feature>
<keyword id="KW-0053">Apoptosis</keyword>
<keyword id="KW-0963">Cytoplasm</keyword>
<keyword id="KW-0333">Golgi apparatus</keyword>
<keyword id="KW-0456">Lyase</keyword>
<keyword id="KW-0524">Neurogenesis</keyword>
<keyword id="KW-0914">Notch signaling pathway</keyword>
<keyword id="KW-1185">Reference proteome</keyword>
<keyword id="KW-0834">Unfolded protein response</keyword>
<dbReference type="EC" id="4.3.2.7" evidence="3"/>
<dbReference type="EMBL" id="EF688602">
    <property type="protein sequence ID" value="ABX10438.1"/>
    <property type="molecule type" value="mRNA"/>
</dbReference>
<dbReference type="EMBL" id="CH473949">
    <property type="protein sequence ID" value="EDL79903.1"/>
    <property type="molecule type" value="Genomic_DNA"/>
</dbReference>
<dbReference type="RefSeq" id="NP_001166908.1">
    <property type="nucleotide sequence ID" value="NM_001173437.1"/>
</dbReference>
<dbReference type="SMR" id="B3STU3"/>
<dbReference type="FunCoup" id="B3STU3">
    <property type="interactions" value="475"/>
</dbReference>
<dbReference type="STRING" id="10116.ENSRNOP00000019392"/>
<dbReference type="iPTMnet" id="B3STU3"/>
<dbReference type="PhosphoSitePlus" id="B3STU3"/>
<dbReference type="PaxDb" id="10116-ENSRNOP00000019392"/>
<dbReference type="ABCD" id="B3STU3">
    <property type="antibodies" value="1 sequenced antibody"/>
</dbReference>
<dbReference type="Ensembl" id="ENSRNOT00000019392.5">
    <property type="protein sequence ID" value="ENSRNOP00000019392.4"/>
    <property type="gene ID" value="ENSRNOG00000014387.5"/>
</dbReference>
<dbReference type="GeneID" id="362196"/>
<dbReference type="KEGG" id="rno:362196"/>
<dbReference type="UCSC" id="RGD:1307153">
    <property type="organism name" value="rat"/>
</dbReference>
<dbReference type="AGR" id="RGD:1307153"/>
<dbReference type="CTD" id="79094"/>
<dbReference type="RGD" id="1307153">
    <property type="gene designation" value="Chac1"/>
</dbReference>
<dbReference type="eggNOG" id="KOG3182">
    <property type="taxonomic scope" value="Eukaryota"/>
</dbReference>
<dbReference type="GeneTree" id="ENSGT00390000003855"/>
<dbReference type="HOGENOM" id="CLU_070703_2_2_1"/>
<dbReference type="InParanoid" id="B3STU3"/>
<dbReference type="OMA" id="HRALKMW"/>
<dbReference type="OrthoDB" id="1933483at2759"/>
<dbReference type="PhylomeDB" id="B3STU3"/>
<dbReference type="TreeFam" id="TF313048"/>
<dbReference type="Reactome" id="R-RNO-174403">
    <property type="pathway name" value="Glutathione synthesis and recycling"/>
</dbReference>
<dbReference type="PRO" id="PR:B3STU3"/>
<dbReference type="Proteomes" id="UP000002494">
    <property type="component" value="Chromosome 3"/>
</dbReference>
<dbReference type="Proteomes" id="UP000234681">
    <property type="component" value="Chromosome 3"/>
</dbReference>
<dbReference type="Bgee" id="ENSRNOG00000014387">
    <property type="expression patterns" value="Expressed in skeletal muscle tissue and 18 other cell types or tissues"/>
</dbReference>
<dbReference type="GO" id="GO:0005737">
    <property type="term" value="C:cytoplasm"/>
    <property type="evidence" value="ECO:0000318"/>
    <property type="project" value="GO_Central"/>
</dbReference>
<dbReference type="GO" id="GO:0005829">
    <property type="term" value="C:cytosol"/>
    <property type="evidence" value="ECO:0000266"/>
    <property type="project" value="RGD"/>
</dbReference>
<dbReference type="GO" id="GO:0005802">
    <property type="term" value="C:trans-Golgi network"/>
    <property type="evidence" value="ECO:0000250"/>
    <property type="project" value="UniProtKB"/>
</dbReference>
<dbReference type="GO" id="GO:0061928">
    <property type="term" value="F:glutathione specific gamma-glutamylcyclotransferase activity"/>
    <property type="evidence" value="ECO:0000266"/>
    <property type="project" value="RGD"/>
</dbReference>
<dbReference type="GO" id="GO:0005112">
    <property type="term" value="F:Notch binding"/>
    <property type="evidence" value="ECO:0000250"/>
    <property type="project" value="UniProtKB"/>
</dbReference>
<dbReference type="GO" id="GO:0006751">
    <property type="term" value="P:glutathione catabolic process"/>
    <property type="evidence" value="ECO:0000318"/>
    <property type="project" value="GO_Central"/>
</dbReference>
<dbReference type="GO" id="GO:0070059">
    <property type="term" value="P:intrinsic apoptotic signaling pathway in response to endoplasmic reticulum stress"/>
    <property type="evidence" value="ECO:0000266"/>
    <property type="project" value="RGD"/>
</dbReference>
<dbReference type="GO" id="GO:0045746">
    <property type="term" value="P:negative regulation of Notch signaling pathway"/>
    <property type="evidence" value="ECO:0000250"/>
    <property type="project" value="UniProtKB"/>
</dbReference>
<dbReference type="GO" id="GO:0010955">
    <property type="term" value="P:negative regulation of protein processing"/>
    <property type="evidence" value="ECO:0000250"/>
    <property type="project" value="UniProtKB"/>
</dbReference>
<dbReference type="GO" id="GO:0022008">
    <property type="term" value="P:neurogenesis"/>
    <property type="evidence" value="ECO:0000250"/>
    <property type="project" value="UniProtKB"/>
</dbReference>
<dbReference type="GO" id="GO:0007219">
    <property type="term" value="P:Notch signaling pathway"/>
    <property type="evidence" value="ECO:0007669"/>
    <property type="project" value="UniProtKB-KW"/>
</dbReference>
<dbReference type="GO" id="GO:0006986">
    <property type="term" value="P:response to unfolded protein"/>
    <property type="evidence" value="ECO:0007669"/>
    <property type="project" value="UniProtKB-KW"/>
</dbReference>
<dbReference type="CDD" id="cd06661">
    <property type="entry name" value="GGCT_like"/>
    <property type="match status" value="1"/>
</dbReference>
<dbReference type="FunFam" id="3.10.490.10:FF:000005">
    <property type="entry name" value="Gamma-glutamylcyclotransferase"/>
    <property type="match status" value="1"/>
</dbReference>
<dbReference type="Gene3D" id="3.10.490.10">
    <property type="entry name" value="Gamma-glutamyl cyclotransferase-like"/>
    <property type="match status" value="1"/>
</dbReference>
<dbReference type="InterPro" id="IPR006840">
    <property type="entry name" value="ChaC"/>
</dbReference>
<dbReference type="InterPro" id="IPR013024">
    <property type="entry name" value="GGCT-like"/>
</dbReference>
<dbReference type="InterPro" id="IPR036568">
    <property type="entry name" value="GGCT-like_sf"/>
</dbReference>
<dbReference type="PANTHER" id="PTHR12192">
    <property type="entry name" value="CATION TRANSPORT PROTEIN CHAC-RELATED"/>
    <property type="match status" value="1"/>
</dbReference>
<dbReference type="PANTHER" id="PTHR12192:SF26">
    <property type="entry name" value="GLUTATHIONE-SPECIFIC GAMMA-GLUTAMYLCYCLOTRANSFERASE 1"/>
    <property type="match status" value="1"/>
</dbReference>
<dbReference type="Pfam" id="PF04752">
    <property type="entry name" value="ChaC"/>
    <property type="match status" value="1"/>
</dbReference>
<dbReference type="SUPFAM" id="SSF110857">
    <property type="entry name" value="Gamma-glutamyl cyclotransferase-like"/>
    <property type="match status" value="1"/>
</dbReference>
<evidence type="ECO:0000250" key="1">
    <source>
        <dbReference type="UniProtKB" id="O75223"/>
    </source>
</evidence>
<evidence type="ECO:0000250" key="2">
    <source>
        <dbReference type="UniProtKB" id="Q8R3J5"/>
    </source>
</evidence>
<evidence type="ECO:0000250" key="3">
    <source>
        <dbReference type="UniProtKB" id="Q9BUX1"/>
    </source>
</evidence>
<evidence type="ECO:0000256" key="4">
    <source>
        <dbReference type="SAM" id="MobiDB-lite"/>
    </source>
</evidence>
<evidence type="ECO:0000303" key="5">
    <source>
    </source>
</evidence>
<evidence type="ECO:0000305" key="6"/>
<reference key="1">
    <citation type="journal article" date="2010" name="PLoS ONE">
        <title>Functional identification of neuroprotective molecules.</title>
        <authorList>
            <person name="Dai C."/>
            <person name="Liang D."/>
            <person name="Li H."/>
            <person name="Sasaki M."/>
            <person name="Dawson T.M."/>
            <person name="Dawson V.L."/>
        </authorList>
    </citation>
    <scope>NUCLEOTIDE SEQUENCE [MRNA]</scope>
    <source>
        <strain>CD Charles River</strain>
    </source>
</reference>
<reference key="2">
    <citation type="journal article" date="2004" name="Nature">
        <title>Genome sequence of the Brown Norway rat yields insights into mammalian evolution.</title>
        <authorList>
            <person name="Gibbs R.A."/>
            <person name="Weinstock G.M."/>
            <person name="Metzker M.L."/>
            <person name="Muzny D.M."/>
            <person name="Sodergren E.J."/>
            <person name="Scherer S."/>
            <person name="Scott G."/>
            <person name="Steffen D."/>
            <person name="Worley K.C."/>
            <person name="Burch P.E."/>
            <person name="Okwuonu G."/>
            <person name="Hines S."/>
            <person name="Lewis L."/>
            <person name="Deramo C."/>
            <person name="Delgado O."/>
            <person name="Dugan-Rocha S."/>
            <person name="Miner G."/>
            <person name="Morgan M."/>
            <person name="Hawes A."/>
            <person name="Gill R."/>
            <person name="Holt R.A."/>
            <person name="Adams M.D."/>
            <person name="Amanatides P.G."/>
            <person name="Baden-Tillson H."/>
            <person name="Barnstead M."/>
            <person name="Chin S."/>
            <person name="Evans C.A."/>
            <person name="Ferriera S."/>
            <person name="Fosler C."/>
            <person name="Glodek A."/>
            <person name="Gu Z."/>
            <person name="Jennings D."/>
            <person name="Kraft C.L."/>
            <person name="Nguyen T."/>
            <person name="Pfannkoch C.M."/>
            <person name="Sitter C."/>
            <person name="Sutton G.G."/>
            <person name="Venter J.C."/>
            <person name="Woodage T."/>
            <person name="Smith D."/>
            <person name="Lee H.-M."/>
            <person name="Gustafson E."/>
            <person name="Cahill P."/>
            <person name="Kana A."/>
            <person name="Doucette-Stamm L."/>
            <person name="Weinstock K."/>
            <person name="Fechtel K."/>
            <person name="Weiss R.B."/>
            <person name="Dunn D.M."/>
            <person name="Green E.D."/>
            <person name="Blakesley R.W."/>
            <person name="Bouffard G.G."/>
            <person name="De Jong P.J."/>
            <person name="Osoegawa K."/>
            <person name="Zhu B."/>
            <person name="Marra M."/>
            <person name="Schein J."/>
            <person name="Bosdet I."/>
            <person name="Fjell C."/>
            <person name="Jones S."/>
            <person name="Krzywinski M."/>
            <person name="Mathewson C."/>
            <person name="Siddiqui A."/>
            <person name="Wye N."/>
            <person name="McPherson J."/>
            <person name="Zhao S."/>
            <person name="Fraser C.M."/>
            <person name="Shetty J."/>
            <person name="Shatsman S."/>
            <person name="Geer K."/>
            <person name="Chen Y."/>
            <person name="Abramzon S."/>
            <person name="Nierman W.C."/>
            <person name="Havlak P.H."/>
            <person name="Chen R."/>
            <person name="Durbin K.J."/>
            <person name="Egan A."/>
            <person name="Ren Y."/>
            <person name="Song X.-Z."/>
            <person name="Li B."/>
            <person name="Liu Y."/>
            <person name="Qin X."/>
            <person name="Cawley S."/>
            <person name="Cooney A.J."/>
            <person name="D'Souza L.M."/>
            <person name="Martin K."/>
            <person name="Wu J.Q."/>
            <person name="Gonzalez-Garay M.L."/>
            <person name="Jackson A.R."/>
            <person name="Kalafus K.J."/>
            <person name="McLeod M.P."/>
            <person name="Milosavljevic A."/>
            <person name="Virk D."/>
            <person name="Volkov A."/>
            <person name="Wheeler D.A."/>
            <person name="Zhang Z."/>
            <person name="Bailey J.A."/>
            <person name="Eichler E.E."/>
            <person name="Tuzun E."/>
            <person name="Birney E."/>
            <person name="Mongin E."/>
            <person name="Ureta-Vidal A."/>
            <person name="Woodwark C."/>
            <person name="Zdobnov E."/>
            <person name="Bork P."/>
            <person name="Suyama M."/>
            <person name="Torrents D."/>
            <person name="Alexandersson M."/>
            <person name="Trask B.J."/>
            <person name="Young J.M."/>
            <person name="Huang H."/>
            <person name="Wang H."/>
            <person name="Xing H."/>
            <person name="Daniels S."/>
            <person name="Gietzen D."/>
            <person name="Schmidt J."/>
            <person name="Stevens K."/>
            <person name="Vitt U."/>
            <person name="Wingrove J."/>
            <person name="Camara F."/>
            <person name="Mar Alba M."/>
            <person name="Abril J.F."/>
            <person name="Guigo R."/>
            <person name="Smit A."/>
            <person name="Dubchak I."/>
            <person name="Rubin E.M."/>
            <person name="Couronne O."/>
            <person name="Poliakov A."/>
            <person name="Huebner N."/>
            <person name="Ganten D."/>
            <person name="Goesele C."/>
            <person name="Hummel O."/>
            <person name="Kreitler T."/>
            <person name="Lee Y.-A."/>
            <person name="Monti J."/>
            <person name="Schulz H."/>
            <person name="Zimdahl H."/>
            <person name="Himmelbauer H."/>
            <person name="Lehrach H."/>
            <person name="Jacob H.J."/>
            <person name="Bromberg S."/>
            <person name="Gullings-Handley J."/>
            <person name="Jensen-Seaman M.I."/>
            <person name="Kwitek A.E."/>
            <person name="Lazar J."/>
            <person name="Pasko D."/>
            <person name="Tonellato P.J."/>
            <person name="Twigger S."/>
            <person name="Ponting C.P."/>
            <person name="Duarte J.M."/>
            <person name="Rice S."/>
            <person name="Goodstadt L."/>
            <person name="Beatson S.A."/>
            <person name="Emes R.D."/>
            <person name="Winter E.E."/>
            <person name="Webber C."/>
            <person name="Brandt P."/>
            <person name="Nyakatura G."/>
            <person name="Adetobi M."/>
            <person name="Chiaromonte F."/>
            <person name="Elnitski L."/>
            <person name="Eswara P."/>
            <person name="Hardison R.C."/>
            <person name="Hou M."/>
            <person name="Kolbe D."/>
            <person name="Makova K."/>
            <person name="Miller W."/>
            <person name="Nekrutenko A."/>
            <person name="Riemer C."/>
            <person name="Schwartz S."/>
            <person name="Taylor J."/>
            <person name="Yang S."/>
            <person name="Zhang Y."/>
            <person name="Lindpaintner K."/>
            <person name="Andrews T.D."/>
            <person name="Caccamo M."/>
            <person name="Clamp M."/>
            <person name="Clarke L."/>
            <person name="Curwen V."/>
            <person name="Durbin R.M."/>
            <person name="Eyras E."/>
            <person name="Searle S.M."/>
            <person name="Cooper G.M."/>
            <person name="Batzoglou S."/>
            <person name="Brudno M."/>
            <person name="Sidow A."/>
            <person name="Stone E.A."/>
            <person name="Payseur B.A."/>
            <person name="Bourque G."/>
            <person name="Lopez-Otin C."/>
            <person name="Puente X.S."/>
            <person name="Chakrabarti K."/>
            <person name="Chatterji S."/>
            <person name="Dewey C."/>
            <person name="Pachter L."/>
            <person name="Bray N."/>
            <person name="Yap V.B."/>
            <person name="Caspi A."/>
            <person name="Tesler G."/>
            <person name="Pevzner P.A."/>
            <person name="Haussler D."/>
            <person name="Roskin K.M."/>
            <person name="Baertsch R."/>
            <person name="Clawson H."/>
            <person name="Furey T.S."/>
            <person name="Hinrichs A.S."/>
            <person name="Karolchik D."/>
            <person name="Kent W.J."/>
            <person name="Rosenbloom K.R."/>
            <person name="Trumbower H."/>
            <person name="Weirauch M."/>
            <person name="Cooper D.N."/>
            <person name="Stenson P.D."/>
            <person name="Ma B."/>
            <person name="Brent M."/>
            <person name="Arumugam M."/>
            <person name="Shteynberg D."/>
            <person name="Copley R.R."/>
            <person name="Taylor M.S."/>
            <person name="Riethman H."/>
            <person name="Mudunuri U."/>
            <person name="Peterson J."/>
            <person name="Guyer M."/>
            <person name="Felsenfeld A."/>
            <person name="Old S."/>
            <person name="Mockrin S."/>
            <person name="Collins F.S."/>
        </authorList>
    </citation>
    <scope>NUCLEOTIDE SEQUENCE [LARGE SCALE GENOMIC DNA]</scope>
    <source>
        <strain>Brown Norway</strain>
    </source>
</reference>
<reference key="3">
    <citation type="submission" date="2005-07" db="EMBL/GenBank/DDBJ databases">
        <authorList>
            <person name="Mural R.J."/>
            <person name="Adams M.D."/>
            <person name="Myers E.W."/>
            <person name="Smith H.O."/>
            <person name="Venter J.C."/>
        </authorList>
    </citation>
    <scope>NUCLEOTIDE SEQUENCE [LARGE SCALE GENOMIC DNA]</scope>
    <source>
        <strain>Brown Norway</strain>
    </source>
</reference>
<gene>
    <name evidence="3" type="primary">Chac1</name>
    <name evidence="3" type="synonym">Botch</name>
    <name evidence="5" type="synonym">Npg7</name>
</gene>
<accession>B3STU3</accession>
<organism>
    <name type="scientific">Rattus norvegicus</name>
    <name type="common">Rat</name>
    <dbReference type="NCBI Taxonomy" id="10116"/>
    <lineage>
        <taxon>Eukaryota</taxon>
        <taxon>Metazoa</taxon>
        <taxon>Chordata</taxon>
        <taxon>Craniata</taxon>
        <taxon>Vertebrata</taxon>
        <taxon>Euteleostomi</taxon>
        <taxon>Mammalia</taxon>
        <taxon>Eutheria</taxon>
        <taxon>Euarchontoglires</taxon>
        <taxon>Glires</taxon>
        <taxon>Rodentia</taxon>
        <taxon>Myomorpha</taxon>
        <taxon>Muroidea</taxon>
        <taxon>Muridae</taxon>
        <taxon>Murinae</taxon>
        <taxon>Rattus</taxon>
    </lineage>
</organism>